<sequence>MKITKLEKKKRLYLMELDNGDKCYITEDTIVRFMLSRDKVISEEELKEIQDFAQFSYGKNLALYHLSFKARTEKEVREYLKKYDIDKNIVSQVIANLKEDKWINDGQYAYAIINTNQLSGDKGPYVLTQKLAQKGISKSTIEENLKEFDFSEVAQRVANKLLKKYEGKLPARALQDKIIQNLTNKGFSYSDAKIAFDDLDSQVDQETTQELIFKELDKQYTKYARKYEGYELKQRLTQVLARKGYDFSDIASALREYL</sequence>
<evidence type="ECO:0000250" key="1"/>
<evidence type="ECO:0000305" key="2"/>
<protein>
    <recommendedName>
        <fullName>Regulatory protein RecX</fullName>
    </recommendedName>
</protein>
<reference key="1">
    <citation type="journal article" date="2001" name="J. Bacteriol.">
        <title>Genome of the bacterium Streptococcus pneumoniae strain R6.</title>
        <authorList>
            <person name="Hoskins J."/>
            <person name="Alborn W.E. Jr."/>
            <person name="Arnold J."/>
            <person name="Blaszczak L.C."/>
            <person name="Burgett S."/>
            <person name="DeHoff B.S."/>
            <person name="Estrem S.T."/>
            <person name="Fritz L."/>
            <person name="Fu D.-J."/>
            <person name="Fuller W."/>
            <person name="Geringer C."/>
            <person name="Gilmour R."/>
            <person name="Glass J.S."/>
            <person name="Khoja H."/>
            <person name="Kraft A.R."/>
            <person name="Lagace R.E."/>
            <person name="LeBlanc D.J."/>
            <person name="Lee L.N."/>
            <person name="Lefkowitz E.J."/>
            <person name="Lu J."/>
            <person name="Matsushima P."/>
            <person name="McAhren S.M."/>
            <person name="McHenney M."/>
            <person name="McLeaster K."/>
            <person name="Mundy C.W."/>
            <person name="Nicas T.I."/>
            <person name="Norris F.H."/>
            <person name="O'Gara M."/>
            <person name="Peery R.B."/>
            <person name="Robertson G.T."/>
            <person name="Rockey P."/>
            <person name="Sun P.-M."/>
            <person name="Winkler M.E."/>
            <person name="Yang Y."/>
            <person name="Young-Bellido M."/>
            <person name="Zhao G."/>
            <person name="Zook C.A."/>
            <person name="Baltz R.H."/>
            <person name="Jaskunas S.R."/>
            <person name="Rosteck P.R. Jr."/>
            <person name="Skatrud P.L."/>
            <person name="Glass J.I."/>
        </authorList>
    </citation>
    <scope>NUCLEOTIDE SEQUENCE [LARGE SCALE GENOMIC DNA]</scope>
    <source>
        <strain>ATCC BAA-255 / R6</strain>
    </source>
</reference>
<comment type="function">
    <text evidence="1">Modulates RecA activity.</text>
</comment>
<comment type="subcellular location">
    <subcellularLocation>
        <location evidence="2">Cytoplasm</location>
    </subcellularLocation>
</comment>
<comment type="similarity">
    <text evidence="2">Belongs to the RecX family.</text>
</comment>
<comment type="sequence caution" evidence="2">
    <conflict type="erroneous initiation">
        <sequence resource="EMBL-CDS" id="AAL00521"/>
    </conflict>
</comment>
<proteinExistence type="inferred from homology"/>
<organism>
    <name type="scientific">Streptococcus pneumoniae (strain ATCC BAA-255 / R6)</name>
    <dbReference type="NCBI Taxonomy" id="171101"/>
    <lineage>
        <taxon>Bacteria</taxon>
        <taxon>Bacillati</taxon>
        <taxon>Bacillota</taxon>
        <taxon>Bacilli</taxon>
        <taxon>Lactobacillales</taxon>
        <taxon>Streptococcaceae</taxon>
        <taxon>Streptococcus</taxon>
    </lineage>
</organism>
<feature type="chain" id="PRO_0000162482" description="Regulatory protein RecX">
    <location>
        <begin position="1"/>
        <end position="258"/>
    </location>
</feature>
<name>RECX_STRR6</name>
<dbReference type="EMBL" id="AE007317">
    <property type="protein sequence ID" value="AAL00521.1"/>
    <property type="status" value="ALT_INIT"/>
    <property type="molecule type" value="Genomic_DNA"/>
</dbReference>
<dbReference type="PIR" id="D98086">
    <property type="entry name" value="D98086"/>
</dbReference>
<dbReference type="RefSeq" id="NP_359310.2">
    <property type="nucleotide sequence ID" value="NC_003098.1"/>
</dbReference>
<dbReference type="RefSeq" id="WP_000705097.1">
    <property type="nucleotide sequence ID" value="NC_003098.1"/>
</dbReference>
<dbReference type="SMR" id="P59212"/>
<dbReference type="STRING" id="171101.spr1718"/>
<dbReference type="KEGG" id="spr:spr1718"/>
<dbReference type="PATRIC" id="fig|171101.6.peg.1858"/>
<dbReference type="eggNOG" id="COG2137">
    <property type="taxonomic scope" value="Bacteria"/>
</dbReference>
<dbReference type="HOGENOM" id="CLU_066607_4_0_9"/>
<dbReference type="Proteomes" id="UP000000586">
    <property type="component" value="Chromosome"/>
</dbReference>
<dbReference type="GO" id="GO:0005737">
    <property type="term" value="C:cytoplasm"/>
    <property type="evidence" value="ECO:0007669"/>
    <property type="project" value="UniProtKB-SubCell"/>
</dbReference>
<dbReference type="GO" id="GO:0006282">
    <property type="term" value="P:regulation of DNA repair"/>
    <property type="evidence" value="ECO:0007669"/>
    <property type="project" value="UniProtKB-UniRule"/>
</dbReference>
<dbReference type="Gene3D" id="1.10.10.10">
    <property type="entry name" value="Winged helix-like DNA-binding domain superfamily/Winged helix DNA-binding domain"/>
    <property type="match status" value="4"/>
</dbReference>
<dbReference type="HAMAP" id="MF_01114">
    <property type="entry name" value="RecX"/>
    <property type="match status" value="1"/>
</dbReference>
<dbReference type="InterPro" id="IPR053926">
    <property type="entry name" value="RecX_HTH_1st"/>
</dbReference>
<dbReference type="InterPro" id="IPR053924">
    <property type="entry name" value="RecX_HTH_2nd"/>
</dbReference>
<dbReference type="InterPro" id="IPR053925">
    <property type="entry name" value="RecX_HTH_3rd"/>
</dbReference>
<dbReference type="InterPro" id="IPR003783">
    <property type="entry name" value="Regulatory_RecX"/>
</dbReference>
<dbReference type="InterPro" id="IPR036388">
    <property type="entry name" value="WH-like_DNA-bd_sf"/>
</dbReference>
<dbReference type="NCBIfam" id="NF010733">
    <property type="entry name" value="PRK14135.1"/>
    <property type="match status" value="1"/>
</dbReference>
<dbReference type="PANTHER" id="PTHR33602">
    <property type="entry name" value="REGULATORY PROTEIN RECX FAMILY PROTEIN"/>
    <property type="match status" value="1"/>
</dbReference>
<dbReference type="PANTHER" id="PTHR33602:SF1">
    <property type="entry name" value="REGULATORY PROTEIN RECX FAMILY PROTEIN"/>
    <property type="match status" value="1"/>
</dbReference>
<dbReference type="Pfam" id="PF21982">
    <property type="entry name" value="RecX_HTH1"/>
    <property type="match status" value="1"/>
</dbReference>
<dbReference type="Pfam" id="PF02631">
    <property type="entry name" value="RecX_HTH2"/>
    <property type="match status" value="1"/>
</dbReference>
<dbReference type="Pfam" id="PF21981">
    <property type="entry name" value="RecX_HTH3"/>
    <property type="match status" value="1"/>
</dbReference>
<accession>P59212</accession>
<gene>
    <name type="primary">recX</name>
    <name type="ordered locus">spr1718</name>
</gene>
<keyword id="KW-0963">Cytoplasm</keyword>
<keyword id="KW-1185">Reference proteome</keyword>